<sequence>MKRRLWLLMLFLFAGHVPAASADSACEGRFVNPITDICWSCIFPLSLGSIKVSQGKVPDTANPSMPIQICPAPPPLFRRIGLAIGYWEPMALTDVTRSPGCMVNLGFSLPAFGKTAQGTAKKDEKQVNGAFYHVHWYKYPLTYWLNIITSLGCLEGGDMDIAYLSEIDPTWTDSSLTTILNPEAVIFANPIAQGACAADAIASAFNMPLDVLFWCAGSQGSMYPFNGWVSNESSPLQSSLLVSERMAFKLHRQGMIMETIGKNNAVCNEYPSPILPKERWRYQMVNMYPDSGQCHPFGRSVTRWETGKNPPNTKKNFGYLMWRKRNCVFL</sequence>
<evidence type="ECO:0000255" key="1"/>
<evidence type="ECO:0000305" key="2">
    <source>
    </source>
</evidence>
<dbReference type="EMBL" id="M34695">
    <property type="protein sequence ID" value="AAA98088.1"/>
    <property type="molecule type" value="Genomic_DNA"/>
</dbReference>
<dbReference type="EMBL" id="U01159">
    <property type="protein sequence ID" value="AAC44198.1"/>
    <property type="molecule type" value="Genomic_DNA"/>
</dbReference>
<dbReference type="EMBL" id="AP001918">
    <property type="protein sequence ID" value="BAA97957.1"/>
    <property type="molecule type" value="Genomic_DNA"/>
</dbReference>
<dbReference type="EMBL" id="M60427">
    <property type="protein sequence ID" value="AAA24913.1"/>
    <property type="molecule type" value="Genomic_DNA"/>
</dbReference>
<dbReference type="EMBL" id="M93106">
    <property type="protein sequence ID" value="AAA24690.1"/>
    <property type="molecule type" value="Genomic_DNA"/>
</dbReference>
<dbReference type="PIR" id="B37756">
    <property type="entry name" value="B37756"/>
</dbReference>
<dbReference type="RefSeq" id="NP_061466.1">
    <property type="nucleotide sequence ID" value="NC_002483.1"/>
</dbReference>
<dbReference type="RefSeq" id="WP_000830185.1">
    <property type="nucleotide sequence ID" value="NC_002483.1"/>
</dbReference>
<dbReference type="DIP" id="DIP-28102N"/>
<dbReference type="KEGG" id="ecoc:C3026_24535"/>
<dbReference type="PATRIC" id="fig|83333.107.peg.625"/>
<dbReference type="OrthoDB" id="9788211at2"/>
<dbReference type="GO" id="GO:0042597">
    <property type="term" value="C:periplasmic space"/>
    <property type="evidence" value="ECO:0007669"/>
    <property type="project" value="UniProtKB-SubCell"/>
</dbReference>
<dbReference type="InterPro" id="IPR009649">
    <property type="entry name" value="TraU"/>
</dbReference>
<dbReference type="NCBIfam" id="NF010297">
    <property type="entry name" value="PRK13737.1"/>
    <property type="match status" value="1"/>
</dbReference>
<dbReference type="Pfam" id="PF06834">
    <property type="entry name" value="TraU"/>
    <property type="match status" value="1"/>
</dbReference>
<feature type="signal peptide" evidence="1">
    <location>
        <begin position="1"/>
        <end position="22"/>
    </location>
</feature>
<feature type="chain" id="PRO_0000024509" description="Protein TraU">
    <location>
        <begin position="23"/>
        <end position="330"/>
    </location>
</feature>
<comment type="function">
    <text>Appears to be more essential to conjugal DNA transfer than to assembly of pilus filaments. Required for F plasmid conjugative transfer.</text>
</comment>
<comment type="subcellular location">
    <subcellularLocation>
        <location evidence="2">Periplasm</location>
    </subcellularLocation>
</comment>
<comment type="miscellaneous">
    <text>May be part of a periplasmic complex containing other proteins.</text>
</comment>
<accession>P18471</accession>
<geneLocation type="plasmid">
    <name>F</name>
</geneLocation>
<organism>
    <name type="scientific">Escherichia coli (strain K12)</name>
    <dbReference type="NCBI Taxonomy" id="83333"/>
    <lineage>
        <taxon>Bacteria</taxon>
        <taxon>Pseudomonadati</taxon>
        <taxon>Pseudomonadota</taxon>
        <taxon>Gammaproteobacteria</taxon>
        <taxon>Enterobacterales</taxon>
        <taxon>Enterobacteriaceae</taxon>
        <taxon>Escherichia</taxon>
    </lineage>
</organism>
<reference key="1">
    <citation type="journal article" date="1990" name="J. Bacteriol.">
        <title>Characterization of the F-plasmid conjugative transfer gene traU.</title>
        <authorList>
            <person name="Moore D."/>
            <person name="Maneewannakul K."/>
            <person name="Maneewannakul S."/>
            <person name="Wu J.H."/>
            <person name="Ippen-Ihler K."/>
            <person name="Bradley D.E."/>
        </authorList>
    </citation>
    <scope>NUCLEOTIDE SEQUENCE [GENOMIC DNA]</scope>
    <source>
        <strain>K12</strain>
    </source>
</reference>
<reference key="2">
    <citation type="journal article" date="1994" name="Microbiol. Rev.">
        <title>Analysis of the sequence and gene products of the transfer region of the F sex factor.</title>
        <authorList>
            <person name="Frost L.S."/>
            <person name="Ippen-Ihler K."/>
            <person name="Skurray R.A."/>
        </authorList>
    </citation>
    <scope>NUCLEOTIDE SEQUENCE [GENOMIC DNA]</scope>
</reference>
<reference key="3">
    <citation type="submission" date="2000-04" db="EMBL/GenBank/DDBJ databases">
        <title>Complete nucleotide sequence of the F plasmid: its implications for organization and diversification of plasmid genomes.</title>
        <authorList>
            <person name="Shimizu H."/>
            <person name="Saitoh Y."/>
            <person name="Suda Y."/>
            <person name="Uehara K."/>
            <person name="Sampei G."/>
            <person name="Mizobuchi K."/>
        </authorList>
    </citation>
    <scope>NUCLEOTIDE SEQUENCE [LARGE SCALE GENOMIC DNA]</scope>
    <source>
        <strain>K12 / CR63</strain>
    </source>
</reference>
<reference key="4">
    <citation type="journal article" date="1991" name="J. Bacteriol.">
        <title>Characterization of trbC, a new F plasmid tra operon gene that is essential to conjugative transfer.</title>
        <authorList>
            <person name="Maneewannakul S."/>
            <person name="Maneewannakul K."/>
            <person name="Ippen-Ihler K."/>
        </authorList>
    </citation>
    <scope>NUCLEOTIDE SEQUENCE [GENOMIC DNA] OF 325-330</scope>
    <source>
        <strain>K12</strain>
    </source>
</reference>
<reference key="5">
    <citation type="journal article" date="1992" name="J. Bacteriol.">
        <title>Characterization, localization, and sequence of F transfer region products: the pilus assembly gene product TraW and a new product, TrbI.</title>
        <authorList>
            <person name="Maneewannakul S."/>
            <person name="Maneewannakul K."/>
            <person name="Ippen-Ihler K."/>
        </authorList>
    </citation>
    <scope>NUCLEOTIDE SEQUENCE [GENOMIC DNA] OF 1-13</scope>
    <scope>SUBCELLULAR LOCATION</scope>
    <source>
        <strain>K12</strain>
    </source>
</reference>
<proteinExistence type="inferred from homology"/>
<keyword id="KW-0184">Conjugation</keyword>
<keyword id="KW-0574">Periplasm</keyword>
<keyword id="KW-0614">Plasmid</keyword>
<keyword id="KW-0732">Signal</keyword>
<protein>
    <recommendedName>
        <fullName>Protein TraU</fullName>
    </recommendedName>
</protein>
<gene>
    <name type="primary">traU</name>
    <name type="ordered locus">ECOK12F087</name>
</gene>
<name>TRAU_ECOLI</name>